<accession>Q3AIA2</accession>
<protein>
    <recommendedName>
        <fullName evidence="1">2-isopropylmalate synthase</fullName>
        <ecNumber evidence="1">2.3.3.13</ecNumber>
    </recommendedName>
    <alternativeName>
        <fullName evidence="1">Alpha-IPM synthase</fullName>
    </alternativeName>
    <alternativeName>
        <fullName evidence="1">Alpha-isopropylmalate synthase</fullName>
    </alternativeName>
</protein>
<organism>
    <name type="scientific">Synechococcus sp. (strain CC9605)</name>
    <dbReference type="NCBI Taxonomy" id="110662"/>
    <lineage>
        <taxon>Bacteria</taxon>
        <taxon>Bacillati</taxon>
        <taxon>Cyanobacteriota</taxon>
        <taxon>Cyanophyceae</taxon>
        <taxon>Synechococcales</taxon>
        <taxon>Synechococcaceae</taxon>
        <taxon>Synechococcus</taxon>
    </lineage>
</organism>
<evidence type="ECO:0000255" key="1">
    <source>
        <dbReference type="HAMAP-Rule" id="MF_01025"/>
    </source>
</evidence>
<dbReference type="EC" id="2.3.3.13" evidence="1"/>
<dbReference type="EMBL" id="CP000110">
    <property type="protein sequence ID" value="ABB35680.1"/>
    <property type="molecule type" value="Genomic_DNA"/>
</dbReference>
<dbReference type="RefSeq" id="WP_011364889.1">
    <property type="nucleotide sequence ID" value="NC_007516.1"/>
</dbReference>
<dbReference type="SMR" id="Q3AIA2"/>
<dbReference type="STRING" id="110662.Syncc9605_1939"/>
<dbReference type="KEGG" id="syd:Syncc9605_1939"/>
<dbReference type="eggNOG" id="COG0119">
    <property type="taxonomic scope" value="Bacteria"/>
</dbReference>
<dbReference type="HOGENOM" id="CLU_022158_0_1_3"/>
<dbReference type="OrthoDB" id="9804858at2"/>
<dbReference type="UniPathway" id="UPA00048">
    <property type="reaction ID" value="UER00070"/>
</dbReference>
<dbReference type="GO" id="GO:0005737">
    <property type="term" value="C:cytoplasm"/>
    <property type="evidence" value="ECO:0007669"/>
    <property type="project" value="UniProtKB-SubCell"/>
</dbReference>
<dbReference type="GO" id="GO:0003852">
    <property type="term" value="F:2-isopropylmalate synthase activity"/>
    <property type="evidence" value="ECO:0007669"/>
    <property type="project" value="UniProtKB-UniRule"/>
</dbReference>
<dbReference type="GO" id="GO:0003985">
    <property type="term" value="F:acetyl-CoA C-acetyltransferase activity"/>
    <property type="evidence" value="ECO:0007669"/>
    <property type="project" value="UniProtKB-UniRule"/>
</dbReference>
<dbReference type="GO" id="GO:0030145">
    <property type="term" value="F:manganese ion binding"/>
    <property type="evidence" value="ECO:0007669"/>
    <property type="project" value="UniProtKB-UniRule"/>
</dbReference>
<dbReference type="GO" id="GO:0009098">
    <property type="term" value="P:L-leucine biosynthetic process"/>
    <property type="evidence" value="ECO:0007669"/>
    <property type="project" value="UniProtKB-UniRule"/>
</dbReference>
<dbReference type="CDD" id="cd07940">
    <property type="entry name" value="DRE_TIM_IPMS"/>
    <property type="match status" value="1"/>
</dbReference>
<dbReference type="FunFam" id="1.10.238.260:FF:000001">
    <property type="entry name" value="2-isopropylmalate synthase"/>
    <property type="match status" value="1"/>
</dbReference>
<dbReference type="FunFam" id="3.20.20.70:FF:000010">
    <property type="entry name" value="2-isopropylmalate synthase"/>
    <property type="match status" value="1"/>
</dbReference>
<dbReference type="Gene3D" id="1.10.238.260">
    <property type="match status" value="1"/>
</dbReference>
<dbReference type="Gene3D" id="3.30.160.270">
    <property type="match status" value="1"/>
</dbReference>
<dbReference type="Gene3D" id="3.20.20.70">
    <property type="entry name" value="Aldolase class I"/>
    <property type="match status" value="1"/>
</dbReference>
<dbReference type="HAMAP" id="MF_01025">
    <property type="entry name" value="LeuA_type1"/>
    <property type="match status" value="1"/>
</dbReference>
<dbReference type="InterPro" id="IPR050073">
    <property type="entry name" value="2-IPM_HCS-like"/>
</dbReference>
<dbReference type="InterPro" id="IPR013709">
    <property type="entry name" value="2-isopropylmalate_synth_dimer"/>
</dbReference>
<dbReference type="InterPro" id="IPR002034">
    <property type="entry name" value="AIPM/Hcit_synth_CS"/>
</dbReference>
<dbReference type="InterPro" id="IPR013785">
    <property type="entry name" value="Aldolase_TIM"/>
</dbReference>
<dbReference type="InterPro" id="IPR054691">
    <property type="entry name" value="LeuA/HCS_post-cat"/>
</dbReference>
<dbReference type="InterPro" id="IPR036230">
    <property type="entry name" value="LeuA_allosteric_dom_sf"/>
</dbReference>
<dbReference type="InterPro" id="IPR005671">
    <property type="entry name" value="LeuA_bact_synth"/>
</dbReference>
<dbReference type="InterPro" id="IPR000891">
    <property type="entry name" value="PYR_CT"/>
</dbReference>
<dbReference type="NCBIfam" id="TIGR00973">
    <property type="entry name" value="leuA_bact"/>
    <property type="match status" value="1"/>
</dbReference>
<dbReference type="NCBIfam" id="NF002086">
    <property type="entry name" value="PRK00915.1-3"/>
    <property type="match status" value="1"/>
</dbReference>
<dbReference type="PANTHER" id="PTHR10277:SF9">
    <property type="entry name" value="2-ISOPROPYLMALATE SYNTHASE 1, CHLOROPLASTIC-RELATED"/>
    <property type="match status" value="1"/>
</dbReference>
<dbReference type="PANTHER" id="PTHR10277">
    <property type="entry name" value="HOMOCITRATE SYNTHASE-RELATED"/>
    <property type="match status" value="1"/>
</dbReference>
<dbReference type="Pfam" id="PF22617">
    <property type="entry name" value="HCS_D2"/>
    <property type="match status" value="1"/>
</dbReference>
<dbReference type="Pfam" id="PF00682">
    <property type="entry name" value="HMGL-like"/>
    <property type="match status" value="1"/>
</dbReference>
<dbReference type="Pfam" id="PF08502">
    <property type="entry name" value="LeuA_dimer"/>
    <property type="match status" value="1"/>
</dbReference>
<dbReference type="SMART" id="SM00917">
    <property type="entry name" value="LeuA_dimer"/>
    <property type="match status" value="1"/>
</dbReference>
<dbReference type="SUPFAM" id="SSF110921">
    <property type="entry name" value="2-isopropylmalate synthase LeuA, allosteric (dimerisation) domain"/>
    <property type="match status" value="1"/>
</dbReference>
<dbReference type="SUPFAM" id="SSF51569">
    <property type="entry name" value="Aldolase"/>
    <property type="match status" value="1"/>
</dbReference>
<dbReference type="PROSITE" id="PS00815">
    <property type="entry name" value="AIPM_HOMOCIT_SYNTH_1"/>
    <property type="match status" value="1"/>
</dbReference>
<dbReference type="PROSITE" id="PS00816">
    <property type="entry name" value="AIPM_HOMOCIT_SYNTH_2"/>
    <property type="match status" value="1"/>
</dbReference>
<dbReference type="PROSITE" id="PS50991">
    <property type="entry name" value="PYR_CT"/>
    <property type="match status" value="1"/>
</dbReference>
<proteinExistence type="inferred from homology"/>
<sequence>MAKDPGRVLIFDTTLRDGEQSPGASLNLEEKLAIAQQLARLGVDVIEAGFPFASPGDFAAVQRIAQQVGGDNGPIICGLARASRADIKACADAVAPAPRRRIHTFIATSDIHLEHKLRKSRGDVLGIVPEMVSYARSLVEDVEFSCEDAGRSDPEFLYEVIEAAIAAGATTINIPDTVGYTTPSEFGALIAGINQHVPNIGEAVISVHGHNDLGLAVANFLEAVKNGARQLECTINGIGERAGNASLEELVMALHVRRRYYNPFFGREEDSPTPLTAVRTEEITKTSRLVSNLTGMVVQPNKAIVGANAFAHESGIHQDGVLKNRLTYEIIDAQTVGLSDNRISLGKLSGRSAVRARLEELGYDLTREDLDEAFARFKELADRKREITDRDLEAIVSEQVQQPEARFQLKLVQVSCGSSLRPTATVTLLDEEGSETTGSAVGTGPVDAVCRALNDLAGVPNELIEFSVKSVTEGIDAMGDVTIRLRRNGALYSGHAADTDVVVAAGMAFVNALNRLVAGEERQSLHPQKDPVVLESRPTL</sequence>
<reference key="1">
    <citation type="submission" date="2005-07" db="EMBL/GenBank/DDBJ databases">
        <title>Complete sequence of Synechococcus sp. CC9605.</title>
        <authorList>
            <consortium name="US DOE Joint Genome Institute"/>
            <person name="Copeland A."/>
            <person name="Lucas S."/>
            <person name="Lapidus A."/>
            <person name="Barry K."/>
            <person name="Detter J.C."/>
            <person name="Glavina T."/>
            <person name="Hammon N."/>
            <person name="Israni S."/>
            <person name="Pitluck S."/>
            <person name="Schmutz J."/>
            <person name="Martinez M."/>
            <person name="Larimer F."/>
            <person name="Land M."/>
            <person name="Kyrpides N."/>
            <person name="Ivanova N."/>
            <person name="Richardson P."/>
        </authorList>
    </citation>
    <scope>NUCLEOTIDE SEQUENCE [LARGE SCALE GENOMIC DNA]</scope>
    <source>
        <strain>CC9605</strain>
    </source>
</reference>
<comment type="function">
    <text evidence="1">Catalyzes the condensation of the acetyl group of acetyl-CoA with 3-methyl-2-oxobutanoate (2-ketoisovalerate) to form 3-carboxy-3-hydroxy-4-methylpentanoate (2-isopropylmalate).</text>
</comment>
<comment type="catalytic activity">
    <reaction evidence="1">
        <text>3-methyl-2-oxobutanoate + acetyl-CoA + H2O = (2S)-2-isopropylmalate + CoA + H(+)</text>
        <dbReference type="Rhea" id="RHEA:21524"/>
        <dbReference type="ChEBI" id="CHEBI:1178"/>
        <dbReference type="ChEBI" id="CHEBI:11851"/>
        <dbReference type="ChEBI" id="CHEBI:15377"/>
        <dbReference type="ChEBI" id="CHEBI:15378"/>
        <dbReference type="ChEBI" id="CHEBI:57287"/>
        <dbReference type="ChEBI" id="CHEBI:57288"/>
        <dbReference type="EC" id="2.3.3.13"/>
    </reaction>
</comment>
<comment type="cofactor">
    <cofactor evidence="1">
        <name>Mn(2+)</name>
        <dbReference type="ChEBI" id="CHEBI:29035"/>
    </cofactor>
</comment>
<comment type="pathway">
    <text evidence="1">Amino-acid biosynthesis; L-leucine biosynthesis; L-leucine from 3-methyl-2-oxobutanoate: step 1/4.</text>
</comment>
<comment type="subunit">
    <text evidence="1">Homodimer.</text>
</comment>
<comment type="subcellular location">
    <subcellularLocation>
        <location evidence="1">Cytoplasm</location>
    </subcellularLocation>
</comment>
<comment type="similarity">
    <text evidence="1">Belongs to the alpha-IPM synthase/homocitrate synthase family. LeuA type 1 subfamily.</text>
</comment>
<keyword id="KW-0028">Amino-acid biosynthesis</keyword>
<keyword id="KW-0100">Branched-chain amino acid biosynthesis</keyword>
<keyword id="KW-0963">Cytoplasm</keyword>
<keyword id="KW-0432">Leucine biosynthesis</keyword>
<keyword id="KW-0464">Manganese</keyword>
<keyword id="KW-0479">Metal-binding</keyword>
<keyword id="KW-0808">Transferase</keyword>
<gene>
    <name evidence="1" type="primary">leuA</name>
    <name type="ordered locus">Syncc9605_1939</name>
</gene>
<feature type="chain" id="PRO_1000149318" description="2-isopropylmalate synthase">
    <location>
        <begin position="1"/>
        <end position="540"/>
    </location>
</feature>
<feature type="domain" description="Pyruvate carboxyltransferase" evidence="1">
    <location>
        <begin position="8"/>
        <end position="271"/>
    </location>
</feature>
<feature type="region of interest" description="Regulatory domain" evidence="1">
    <location>
        <begin position="408"/>
        <end position="540"/>
    </location>
</feature>
<feature type="binding site" evidence="1">
    <location>
        <position position="17"/>
    </location>
    <ligand>
        <name>Mn(2+)</name>
        <dbReference type="ChEBI" id="CHEBI:29035"/>
    </ligand>
</feature>
<feature type="binding site" evidence="1">
    <location>
        <position position="208"/>
    </location>
    <ligand>
        <name>Mn(2+)</name>
        <dbReference type="ChEBI" id="CHEBI:29035"/>
    </ligand>
</feature>
<feature type="binding site" evidence="1">
    <location>
        <position position="210"/>
    </location>
    <ligand>
        <name>Mn(2+)</name>
        <dbReference type="ChEBI" id="CHEBI:29035"/>
    </ligand>
</feature>
<feature type="binding site" evidence="1">
    <location>
        <position position="244"/>
    </location>
    <ligand>
        <name>Mn(2+)</name>
        <dbReference type="ChEBI" id="CHEBI:29035"/>
    </ligand>
</feature>
<name>LEU1_SYNSC</name>